<keyword id="KW-0687">Ribonucleoprotein</keyword>
<keyword id="KW-0689">Ribosomal protein</keyword>
<keyword id="KW-0694">RNA-binding</keyword>
<keyword id="KW-0699">rRNA-binding</keyword>
<proteinExistence type="inferred from homology"/>
<sequence>MPKVTVYNQTGSQVGEIELAEAIFGIEPNEAVLFEAVMMQRASLRQGTHKVKTRSEVRGGGRKPWRQKGTGRARQGSIRSPQWRGGGTVFGPTPRSYAYKLPKKVRRLAIKSALATKVVENNIVVLEDLVLNAPKTKDMLAVLKGLTVEKKALIVTADANESVELSARNIPGVTVITADGVNVLDVLHHDKLIMTKAAVEKVEEVLA</sequence>
<evidence type="ECO:0000255" key="1">
    <source>
        <dbReference type="HAMAP-Rule" id="MF_01328"/>
    </source>
</evidence>
<evidence type="ECO:0000256" key="2">
    <source>
        <dbReference type="SAM" id="MobiDB-lite"/>
    </source>
</evidence>
<evidence type="ECO:0000305" key="3"/>
<accession>B7HJ49</accession>
<name>RL4_BACC4</name>
<comment type="function">
    <text evidence="1">One of the primary rRNA binding proteins, this protein initially binds near the 5'-end of the 23S rRNA. It is important during the early stages of 50S assembly. It makes multiple contacts with different domains of the 23S rRNA in the assembled 50S subunit and ribosome.</text>
</comment>
<comment type="function">
    <text evidence="1">Forms part of the polypeptide exit tunnel.</text>
</comment>
<comment type="subunit">
    <text evidence="1">Part of the 50S ribosomal subunit.</text>
</comment>
<comment type="similarity">
    <text evidence="1">Belongs to the universal ribosomal protein uL4 family.</text>
</comment>
<organism>
    <name type="scientific">Bacillus cereus (strain B4264)</name>
    <dbReference type="NCBI Taxonomy" id="405532"/>
    <lineage>
        <taxon>Bacteria</taxon>
        <taxon>Bacillati</taxon>
        <taxon>Bacillota</taxon>
        <taxon>Bacilli</taxon>
        <taxon>Bacillales</taxon>
        <taxon>Bacillaceae</taxon>
        <taxon>Bacillus</taxon>
        <taxon>Bacillus cereus group</taxon>
    </lineage>
</organism>
<gene>
    <name evidence="1" type="primary">rplD</name>
    <name type="ordered locus">BCB4264_A0132</name>
</gene>
<dbReference type="EMBL" id="CP001176">
    <property type="protein sequence ID" value="ACK62583.1"/>
    <property type="molecule type" value="Genomic_DNA"/>
</dbReference>
<dbReference type="RefSeq" id="WP_001127258.1">
    <property type="nucleotide sequence ID" value="NZ_VEHB01000017.1"/>
</dbReference>
<dbReference type="SMR" id="B7HJ49"/>
<dbReference type="GeneID" id="93010942"/>
<dbReference type="KEGG" id="bcb:BCB4264_A0132"/>
<dbReference type="HOGENOM" id="CLU_041575_5_2_9"/>
<dbReference type="Proteomes" id="UP000007096">
    <property type="component" value="Chromosome"/>
</dbReference>
<dbReference type="GO" id="GO:1990904">
    <property type="term" value="C:ribonucleoprotein complex"/>
    <property type="evidence" value="ECO:0007669"/>
    <property type="project" value="UniProtKB-KW"/>
</dbReference>
<dbReference type="GO" id="GO:0005840">
    <property type="term" value="C:ribosome"/>
    <property type="evidence" value="ECO:0007669"/>
    <property type="project" value="UniProtKB-KW"/>
</dbReference>
<dbReference type="GO" id="GO:0019843">
    <property type="term" value="F:rRNA binding"/>
    <property type="evidence" value="ECO:0007669"/>
    <property type="project" value="UniProtKB-UniRule"/>
</dbReference>
<dbReference type="GO" id="GO:0003735">
    <property type="term" value="F:structural constituent of ribosome"/>
    <property type="evidence" value="ECO:0007669"/>
    <property type="project" value="InterPro"/>
</dbReference>
<dbReference type="GO" id="GO:0006412">
    <property type="term" value="P:translation"/>
    <property type="evidence" value="ECO:0007669"/>
    <property type="project" value="UniProtKB-UniRule"/>
</dbReference>
<dbReference type="FunFam" id="3.40.1370.10:FF:000003">
    <property type="entry name" value="50S ribosomal protein L4"/>
    <property type="match status" value="1"/>
</dbReference>
<dbReference type="Gene3D" id="3.40.1370.10">
    <property type="match status" value="1"/>
</dbReference>
<dbReference type="HAMAP" id="MF_01328_B">
    <property type="entry name" value="Ribosomal_uL4_B"/>
    <property type="match status" value="1"/>
</dbReference>
<dbReference type="InterPro" id="IPR002136">
    <property type="entry name" value="Ribosomal_uL4"/>
</dbReference>
<dbReference type="InterPro" id="IPR013005">
    <property type="entry name" value="Ribosomal_uL4-like"/>
</dbReference>
<dbReference type="InterPro" id="IPR023574">
    <property type="entry name" value="Ribosomal_uL4_dom_sf"/>
</dbReference>
<dbReference type="NCBIfam" id="TIGR03953">
    <property type="entry name" value="rplD_bact"/>
    <property type="match status" value="1"/>
</dbReference>
<dbReference type="PANTHER" id="PTHR10746">
    <property type="entry name" value="50S RIBOSOMAL PROTEIN L4"/>
    <property type="match status" value="1"/>
</dbReference>
<dbReference type="PANTHER" id="PTHR10746:SF6">
    <property type="entry name" value="LARGE RIBOSOMAL SUBUNIT PROTEIN UL4M"/>
    <property type="match status" value="1"/>
</dbReference>
<dbReference type="Pfam" id="PF00573">
    <property type="entry name" value="Ribosomal_L4"/>
    <property type="match status" value="1"/>
</dbReference>
<dbReference type="SUPFAM" id="SSF52166">
    <property type="entry name" value="Ribosomal protein L4"/>
    <property type="match status" value="1"/>
</dbReference>
<feature type="chain" id="PRO_1000142079" description="Large ribosomal subunit protein uL4">
    <location>
        <begin position="1"/>
        <end position="207"/>
    </location>
</feature>
<feature type="region of interest" description="Disordered" evidence="2">
    <location>
        <begin position="45"/>
        <end position="89"/>
    </location>
</feature>
<feature type="compositionally biased region" description="Basic residues" evidence="2">
    <location>
        <begin position="60"/>
        <end position="71"/>
    </location>
</feature>
<reference key="1">
    <citation type="submission" date="2008-10" db="EMBL/GenBank/DDBJ databases">
        <title>Genome sequence of Bacillus cereus B4264.</title>
        <authorList>
            <person name="Dodson R.J."/>
            <person name="Durkin A.S."/>
            <person name="Rosovitz M.J."/>
            <person name="Rasko D.A."/>
            <person name="Hoffmaster A."/>
            <person name="Ravel J."/>
            <person name="Sutton G."/>
        </authorList>
    </citation>
    <scope>NUCLEOTIDE SEQUENCE [LARGE SCALE GENOMIC DNA]</scope>
    <source>
        <strain>B4264</strain>
    </source>
</reference>
<protein>
    <recommendedName>
        <fullName evidence="1">Large ribosomal subunit protein uL4</fullName>
    </recommendedName>
    <alternativeName>
        <fullName evidence="3">50S ribosomal protein L4</fullName>
    </alternativeName>
</protein>